<accession>P30987</accession>
<evidence type="ECO:0000250" key="1"/>
<evidence type="ECO:0000255" key="2"/>
<evidence type="ECO:0000255" key="3">
    <source>
        <dbReference type="PROSITE-ProRule" id="PRU00521"/>
    </source>
</evidence>
<evidence type="ECO:0007744" key="4">
    <source>
    </source>
</evidence>
<feature type="chain" id="PRO_0000070139" description="Thromboxane A2 receptor">
    <location>
        <begin position="1"/>
        <end position="341"/>
    </location>
</feature>
<feature type="topological domain" description="Extracellular" evidence="2">
    <location>
        <begin position="1"/>
        <end position="29"/>
    </location>
</feature>
<feature type="transmembrane region" description="Helical; Name=1" evidence="2">
    <location>
        <begin position="30"/>
        <end position="52"/>
    </location>
</feature>
<feature type="topological domain" description="Cytoplasmic" evidence="2">
    <location>
        <begin position="53"/>
        <end position="65"/>
    </location>
</feature>
<feature type="transmembrane region" description="Helical; Name=2" evidence="2">
    <location>
        <begin position="66"/>
        <end position="86"/>
    </location>
</feature>
<feature type="topological domain" description="Extracellular" evidence="2">
    <location>
        <begin position="87"/>
        <end position="105"/>
    </location>
</feature>
<feature type="transmembrane region" description="Helical; Name=3" evidence="2">
    <location>
        <begin position="106"/>
        <end position="127"/>
    </location>
</feature>
<feature type="topological domain" description="Cytoplasmic" evidence="2">
    <location>
        <begin position="128"/>
        <end position="147"/>
    </location>
</feature>
<feature type="transmembrane region" description="Helical; Name=4" evidence="2">
    <location>
        <begin position="148"/>
        <end position="170"/>
    </location>
</feature>
<feature type="topological domain" description="Extracellular" evidence="2">
    <location>
        <begin position="171"/>
        <end position="191"/>
    </location>
</feature>
<feature type="transmembrane region" description="Helical; Name=5" evidence="2">
    <location>
        <begin position="192"/>
        <end position="217"/>
    </location>
</feature>
<feature type="topological domain" description="Cytoplasmic" evidence="2">
    <location>
        <begin position="218"/>
        <end position="244"/>
    </location>
</feature>
<feature type="transmembrane region" description="Helical; Name=6" evidence="2">
    <location>
        <begin position="245"/>
        <end position="268"/>
    </location>
</feature>
<feature type="topological domain" description="Extracellular" evidence="2">
    <location>
        <begin position="269"/>
        <end position="287"/>
    </location>
</feature>
<feature type="transmembrane region" description="Helical; Name=7" evidence="2">
    <location>
        <begin position="288"/>
        <end position="309"/>
    </location>
</feature>
<feature type="topological domain" description="Cytoplasmic" evidence="2">
    <location>
        <begin position="310"/>
        <end position="341"/>
    </location>
</feature>
<feature type="modified residue" description="Phosphoserine" evidence="4">
    <location>
        <position position="328"/>
    </location>
</feature>
<feature type="glycosylation site" description="N-linked (GlcNAc...) asparagine" evidence="2">
    <location>
        <position position="4"/>
    </location>
</feature>
<feature type="glycosylation site" description="N-linked (GlcNAc...) asparagine" evidence="2">
    <location>
        <position position="16"/>
    </location>
</feature>
<feature type="disulfide bond" evidence="3">
    <location>
        <begin position="104"/>
        <end position="181"/>
    </location>
</feature>
<organism>
    <name type="scientific">Mus musculus</name>
    <name type="common">Mouse</name>
    <dbReference type="NCBI Taxonomy" id="10090"/>
    <lineage>
        <taxon>Eukaryota</taxon>
        <taxon>Metazoa</taxon>
        <taxon>Chordata</taxon>
        <taxon>Craniata</taxon>
        <taxon>Vertebrata</taxon>
        <taxon>Euteleostomi</taxon>
        <taxon>Mammalia</taxon>
        <taxon>Eutheria</taxon>
        <taxon>Euarchontoglires</taxon>
        <taxon>Glires</taxon>
        <taxon>Rodentia</taxon>
        <taxon>Myomorpha</taxon>
        <taxon>Muroidea</taxon>
        <taxon>Muridae</taxon>
        <taxon>Murinae</taxon>
        <taxon>Mus</taxon>
        <taxon>Mus</taxon>
    </lineage>
</organism>
<reference key="1">
    <citation type="journal article" date="1992" name="Biochem. Biophys. Res. Commun.">
        <title>Mouse thromboxane A2 receptor: cDNA cloning, expression and northern blot analysis.</title>
        <authorList>
            <person name="Namba T."/>
            <person name="Sugimoto Y."/>
            <person name="Hirata M."/>
            <person name="Hayashi Y."/>
            <person name="Honda A."/>
            <person name="Watabe A."/>
            <person name="Negishi M."/>
            <person name="Ichikawa A."/>
            <person name="Narumiya S."/>
        </authorList>
    </citation>
    <scope>NUCLEOTIDE SEQUENCE [MRNA]</scope>
    <source>
        <strain>ddY</strain>
        <tissue>Lung</tissue>
    </source>
</reference>
<reference key="2">
    <citation type="journal article" date="2010" name="Cell">
        <title>A tissue-specific atlas of mouse protein phosphorylation and expression.</title>
        <authorList>
            <person name="Huttlin E.L."/>
            <person name="Jedrychowski M.P."/>
            <person name="Elias J.E."/>
            <person name="Goswami T."/>
            <person name="Rad R."/>
            <person name="Beausoleil S.A."/>
            <person name="Villen J."/>
            <person name="Haas W."/>
            <person name="Sowa M.E."/>
            <person name="Gygi S.P."/>
        </authorList>
    </citation>
    <scope>PHOSPHORYLATION [LARGE SCALE ANALYSIS] AT SER-328</scope>
    <scope>IDENTIFICATION BY MASS SPECTROMETRY [LARGE SCALE ANALYSIS]</scope>
    <source>
        <tissue>Lung</tissue>
        <tissue>Spleen</tissue>
    </source>
</reference>
<name>TA2R_MOUSE</name>
<protein>
    <recommendedName>
        <fullName>Thromboxane A2 receptor</fullName>
        <shortName>TXA2-R</shortName>
    </recommendedName>
    <alternativeName>
        <fullName>Prostanoid TP receptor</fullName>
    </alternativeName>
</protein>
<proteinExistence type="evidence at protein level"/>
<comment type="function">
    <text>Receptor for thromboxane A2 (TXA2), a potent stimulator of platelet aggregation. The activity of this receptor is mediated by a G-protein that activates a phosphatidylinositol-calcium second messenger system. In the kidney, the binding of TXA2 to glomerular TP receptors causes intense vasoconstriction. Activates phospholipase C and adenylyl cyclase.</text>
</comment>
<comment type="subunit">
    <text evidence="1">Interacts with RPGRIP1L. Interacts with RACK1; the interaction regulates TBXA2R cell surface expression (By similarity).</text>
</comment>
<comment type="subcellular location">
    <subcellularLocation>
        <location>Cell membrane</location>
        <topology>Multi-pass membrane protein</topology>
    </subcellularLocation>
</comment>
<comment type="similarity">
    <text evidence="3">Belongs to the G-protein coupled receptor 1 family.</text>
</comment>
<gene>
    <name type="primary">Tbxa2r</name>
</gene>
<dbReference type="EMBL" id="D10849">
    <property type="protein sequence ID" value="BAA01622.1"/>
    <property type="molecule type" value="mRNA"/>
</dbReference>
<dbReference type="CCDS" id="CCDS24053.1"/>
<dbReference type="PIR" id="JH0606">
    <property type="entry name" value="JH0606"/>
</dbReference>
<dbReference type="RefSeq" id="NP_001264194.1">
    <property type="nucleotide sequence ID" value="NM_001277265.1"/>
</dbReference>
<dbReference type="RefSeq" id="NP_001345441.1">
    <property type="nucleotide sequence ID" value="NM_001358512.1"/>
</dbReference>
<dbReference type="RefSeq" id="NP_033351.1">
    <property type="nucleotide sequence ID" value="NM_009325.4"/>
</dbReference>
<dbReference type="RefSeq" id="XP_006513523.1">
    <property type="nucleotide sequence ID" value="XM_006513460.3"/>
</dbReference>
<dbReference type="SMR" id="P30987"/>
<dbReference type="FunCoup" id="P30987">
    <property type="interactions" value="804"/>
</dbReference>
<dbReference type="STRING" id="10090.ENSMUSP00000151447"/>
<dbReference type="BindingDB" id="P30987"/>
<dbReference type="ChEMBL" id="CHEMBL1795181"/>
<dbReference type="DrugCentral" id="P30987"/>
<dbReference type="GuidetoPHARMACOLOGY" id="346"/>
<dbReference type="GlyCosmos" id="P30987">
    <property type="glycosylation" value="2 sites, No reported glycans"/>
</dbReference>
<dbReference type="GlyGen" id="P30987">
    <property type="glycosylation" value="2 sites"/>
</dbReference>
<dbReference type="iPTMnet" id="P30987"/>
<dbReference type="PhosphoSitePlus" id="P30987"/>
<dbReference type="jPOST" id="P30987"/>
<dbReference type="PaxDb" id="10090-ENSMUSP00000100962"/>
<dbReference type="ProteomicsDB" id="259335"/>
<dbReference type="Antibodypedia" id="5899">
    <property type="antibodies" value="190 antibodies from 29 providers"/>
</dbReference>
<dbReference type="DNASU" id="21390"/>
<dbReference type="Ensembl" id="ENSMUST00000105325.4">
    <property type="protein sequence ID" value="ENSMUSP00000100962.3"/>
    <property type="gene ID" value="ENSMUSG00000034881.9"/>
</dbReference>
<dbReference type="Ensembl" id="ENSMUST00000220312.2">
    <property type="protein sequence ID" value="ENSMUSP00000151447.2"/>
    <property type="gene ID" value="ENSMUSG00000034881.9"/>
</dbReference>
<dbReference type="GeneID" id="21390"/>
<dbReference type="KEGG" id="mmu:21390"/>
<dbReference type="UCSC" id="uc007ghg.2">
    <property type="organism name" value="mouse"/>
</dbReference>
<dbReference type="AGR" id="MGI:98496"/>
<dbReference type="CTD" id="6915"/>
<dbReference type="MGI" id="MGI:98496">
    <property type="gene designation" value="Tbxa2r"/>
</dbReference>
<dbReference type="VEuPathDB" id="HostDB:ENSMUSG00000034881"/>
<dbReference type="eggNOG" id="KOG3656">
    <property type="taxonomic scope" value="Eukaryota"/>
</dbReference>
<dbReference type="GeneTree" id="ENSGT01030000234559"/>
<dbReference type="HOGENOM" id="CLU_045991_3_0_1"/>
<dbReference type="InParanoid" id="P30987"/>
<dbReference type="OMA" id="HAILFDW"/>
<dbReference type="OrthoDB" id="8631411at2759"/>
<dbReference type="PhylomeDB" id="P30987"/>
<dbReference type="TreeFam" id="TF324982"/>
<dbReference type="Reactome" id="R-MMU-391908">
    <property type="pathway name" value="Prostanoid ligand receptors"/>
</dbReference>
<dbReference type="Reactome" id="R-MMU-416476">
    <property type="pathway name" value="G alpha (q) signalling events"/>
</dbReference>
<dbReference type="Reactome" id="R-MMU-416482">
    <property type="pathway name" value="G alpha (12/13) signalling events"/>
</dbReference>
<dbReference type="Reactome" id="R-MMU-428930">
    <property type="pathway name" value="Thromboxane signalling through TP receptor"/>
</dbReference>
<dbReference type="BioGRID-ORCS" id="21390">
    <property type="hits" value="5 hits in 79 CRISPR screens"/>
</dbReference>
<dbReference type="PRO" id="PR:P30987"/>
<dbReference type="Proteomes" id="UP000000589">
    <property type="component" value="Chromosome 10"/>
</dbReference>
<dbReference type="RNAct" id="P30987">
    <property type="molecule type" value="protein"/>
</dbReference>
<dbReference type="Bgee" id="ENSMUSG00000034881">
    <property type="expression patterns" value="Expressed in thymus and 86 other cell types or tissues"/>
</dbReference>
<dbReference type="ExpressionAtlas" id="P30987">
    <property type="expression patterns" value="baseline and differential"/>
</dbReference>
<dbReference type="GO" id="GO:0001669">
    <property type="term" value="C:acrosomal vesicle"/>
    <property type="evidence" value="ECO:0007669"/>
    <property type="project" value="Ensembl"/>
</dbReference>
<dbReference type="GO" id="GO:0016607">
    <property type="term" value="C:nuclear speck"/>
    <property type="evidence" value="ECO:0007669"/>
    <property type="project" value="Ensembl"/>
</dbReference>
<dbReference type="GO" id="GO:0005886">
    <property type="term" value="C:plasma membrane"/>
    <property type="evidence" value="ECO:0007669"/>
    <property type="project" value="UniProtKB-SubCell"/>
</dbReference>
<dbReference type="GO" id="GO:0004960">
    <property type="term" value="F:thromboxane receptor activity"/>
    <property type="evidence" value="ECO:0000314"/>
    <property type="project" value="MGI"/>
</dbReference>
<dbReference type="GO" id="GO:0071222">
    <property type="term" value="P:cellular response to lipopolysaccharide"/>
    <property type="evidence" value="ECO:0007669"/>
    <property type="project" value="Ensembl"/>
</dbReference>
<dbReference type="GO" id="GO:0006954">
    <property type="term" value="P:inflammatory response"/>
    <property type="evidence" value="ECO:0000315"/>
    <property type="project" value="MGI"/>
</dbReference>
<dbReference type="GO" id="GO:0090051">
    <property type="term" value="P:negative regulation of cell migration involved in sprouting angiogenesis"/>
    <property type="evidence" value="ECO:0007669"/>
    <property type="project" value="Ensembl"/>
</dbReference>
<dbReference type="GO" id="GO:0045766">
    <property type="term" value="P:positive regulation of angiogenesis"/>
    <property type="evidence" value="ECO:0007669"/>
    <property type="project" value="Ensembl"/>
</dbReference>
<dbReference type="GO" id="GO:0030194">
    <property type="term" value="P:positive regulation of blood coagulation"/>
    <property type="evidence" value="ECO:0007669"/>
    <property type="project" value="Ensembl"/>
</dbReference>
<dbReference type="GO" id="GO:0045777">
    <property type="term" value="P:positive regulation of blood pressure"/>
    <property type="evidence" value="ECO:0007669"/>
    <property type="project" value="Ensembl"/>
</dbReference>
<dbReference type="GO" id="GO:0007204">
    <property type="term" value="P:positive regulation of cytosolic calcium ion concentration"/>
    <property type="evidence" value="ECO:0007669"/>
    <property type="project" value="Ensembl"/>
</dbReference>
<dbReference type="GO" id="GO:0045987">
    <property type="term" value="P:positive regulation of smooth muscle contraction"/>
    <property type="evidence" value="ECO:0000314"/>
    <property type="project" value="MGI"/>
</dbReference>
<dbReference type="GO" id="GO:0045907">
    <property type="term" value="P:positive regulation of vasoconstriction"/>
    <property type="evidence" value="ECO:0007669"/>
    <property type="project" value="Ensembl"/>
</dbReference>
<dbReference type="GO" id="GO:0019229">
    <property type="term" value="P:regulation of vasoconstriction"/>
    <property type="evidence" value="ECO:0000316"/>
    <property type="project" value="MGI"/>
</dbReference>
<dbReference type="GO" id="GO:0045471">
    <property type="term" value="P:response to ethanol"/>
    <property type="evidence" value="ECO:0007669"/>
    <property type="project" value="Ensembl"/>
</dbReference>
<dbReference type="GO" id="GO:0032496">
    <property type="term" value="P:response to lipopolysaccharide"/>
    <property type="evidence" value="ECO:0000315"/>
    <property type="project" value="MGI"/>
</dbReference>
<dbReference type="GO" id="GO:0007584">
    <property type="term" value="P:response to nutrient"/>
    <property type="evidence" value="ECO:0007669"/>
    <property type="project" value="Ensembl"/>
</dbReference>
<dbReference type="GO" id="GO:0033574">
    <property type="term" value="P:response to testosterone"/>
    <property type="evidence" value="ECO:0007669"/>
    <property type="project" value="Ensembl"/>
</dbReference>
<dbReference type="GO" id="GO:0009410">
    <property type="term" value="P:response to xenobiotic stimulus"/>
    <property type="evidence" value="ECO:0007669"/>
    <property type="project" value="Ensembl"/>
</dbReference>
<dbReference type="GO" id="GO:0006939">
    <property type="term" value="P:smooth muscle contraction"/>
    <property type="evidence" value="ECO:0000314"/>
    <property type="project" value="MGI"/>
</dbReference>
<dbReference type="FunFam" id="1.20.1070.10:FF:000163">
    <property type="entry name" value="Thromboxane A2 receptor"/>
    <property type="match status" value="1"/>
</dbReference>
<dbReference type="Gene3D" id="1.20.1070.10">
    <property type="entry name" value="Rhodopsin 7-helix transmembrane proteins"/>
    <property type="match status" value="1"/>
</dbReference>
<dbReference type="InterPro" id="IPR000276">
    <property type="entry name" value="GPCR_Rhodpsn"/>
</dbReference>
<dbReference type="InterPro" id="IPR017452">
    <property type="entry name" value="GPCR_Rhodpsn_7TM"/>
</dbReference>
<dbReference type="InterPro" id="IPR008365">
    <property type="entry name" value="Prostanoid_rcpt"/>
</dbReference>
<dbReference type="InterPro" id="IPR001105">
    <property type="entry name" value="Thbox_rcpt"/>
</dbReference>
<dbReference type="PANTHER" id="PTHR11866">
    <property type="entry name" value="G-PROTEIN COUPLED RECEPTOR FAMILY 1 MEMBER"/>
    <property type="match status" value="1"/>
</dbReference>
<dbReference type="PANTHER" id="PTHR11866:SF5">
    <property type="entry name" value="THROMBOXANE A2 RECEPTOR"/>
    <property type="match status" value="1"/>
</dbReference>
<dbReference type="Pfam" id="PF00001">
    <property type="entry name" value="7tm_1"/>
    <property type="match status" value="1"/>
</dbReference>
<dbReference type="PRINTS" id="PR01788">
    <property type="entry name" value="PROSTANOIDR"/>
</dbReference>
<dbReference type="PRINTS" id="PR00429">
    <property type="entry name" value="THROMBOXANER"/>
</dbReference>
<dbReference type="SUPFAM" id="SSF81321">
    <property type="entry name" value="Family A G protein-coupled receptor-like"/>
    <property type="match status" value="1"/>
</dbReference>
<dbReference type="PROSITE" id="PS00237">
    <property type="entry name" value="G_PROTEIN_RECEP_F1_1"/>
    <property type="match status" value="1"/>
</dbReference>
<dbReference type="PROSITE" id="PS50262">
    <property type="entry name" value="G_PROTEIN_RECEP_F1_2"/>
    <property type="match status" value="1"/>
</dbReference>
<keyword id="KW-1003">Cell membrane</keyword>
<keyword id="KW-1015">Disulfide bond</keyword>
<keyword id="KW-0297">G-protein coupled receptor</keyword>
<keyword id="KW-0325">Glycoprotein</keyword>
<keyword id="KW-0472">Membrane</keyword>
<keyword id="KW-0597">Phosphoprotein</keyword>
<keyword id="KW-0675">Receptor</keyword>
<keyword id="KW-1185">Reference proteome</keyword>
<keyword id="KW-0807">Transducer</keyword>
<keyword id="KW-0812">Transmembrane</keyword>
<keyword id="KW-1133">Transmembrane helix</keyword>
<sequence length="341" mass="37098">MWPNGTSLGACFRPVNITLQERRAIASPWFAASFCALGLGSNLLALSVLAGARPGAGPRSSFLALLCGLVLTDFLGLLVTGAIVASQHAALLDWRATDPSCRLCYFMGVAMVFFGLCPLLLGAAMASERFVGITRPFSRPTATSRRAWATVGLVWVAAGALGLLPLLGLGRYSVQYPGSWCFLTLGTQRGDVVFGLIFALLGSASVGLSLLLNTVSVATLCRVYHTREATQRPRDCEVEMMVQLVGIMVVATVCWMPLLVFIMQTLLQTPPVMSFSGQLLRATEHQLLIYLRVATWNQILDPWVYILFRRSVLRRLHPRFSSQLQAVSLRRPPAQAMLSGP</sequence>